<gene>
    <name evidence="1" type="primary">rplN</name>
    <name type="ordered locus">VFMJ11_0235</name>
</gene>
<dbReference type="EMBL" id="CP001139">
    <property type="protein sequence ID" value="ACH65031.1"/>
    <property type="molecule type" value="Genomic_DNA"/>
</dbReference>
<dbReference type="RefSeq" id="WP_005417241.1">
    <property type="nucleotide sequence ID" value="NC_011184.1"/>
</dbReference>
<dbReference type="SMR" id="B5FG19"/>
<dbReference type="GeneID" id="56276445"/>
<dbReference type="KEGG" id="vfm:VFMJ11_0235"/>
<dbReference type="HOGENOM" id="CLU_095071_2_1_6"/>
<dbReference type="Proteomes" id="UP000001857">
    <property type="component" value="Chromosome I"/>
</dbReference>
<dbReference type="GO" id="GO:0022625">
    <property type="term" value="C:cytosolic large ribosomal subunit"/>
    <property type="evidence" value="ECO:0007669"/>
    <property type="project" value="TreeGrafter"/>
</dbReference>
<dbReference type="GO" id="GO:0070180">
    <property type="term" value="F:large ribosomal subunit rRNA binding"/>
    <property type="evidence" value="ECO:0007669"/>
    <property type="project" value="TreeGrafter"/>
</dbReference>
<dbReference type="GO" id="GO:0003735">
    <property type="term" value="F:structural constituent of ribosome"/>
    <property type="evidence" value="ECO:0007669"/>
    <property type="project" value="InterPro"/>
</dbReference>
<dbReference type="GO" id="GO:0006412">
    <property type="term" value="P:translation"/>
    <property type="evidence" value="ECO:0007669"/>
    <property type="project" value="UniProtKB-UniRule"/>
</dbReference>
<dbReference type="CDD" id="cd00337">
    <property type="entry name" value="Ribosomal_uL14"/>
    <property type="match status" value="1"/>
</dbReference>
<dbReference type="FunFam" id="2.40.150.20:FF:000001">
    <property type="entry name" value="50S ribosomal protein L14"/>
    <property type="match status" value="1"/>
</dbReference>
<dbReference type="Gene3D" id="2.40.150.20">
    <property type="entry name" value="Ribosomal protein L14"/>
    <property type="match status" value="1"/>
</dbReference>
<dbReference type="HAMAP" id="MF_01367">
    <property type="entry name" value="Ribosomal_uL14"/>
    <property type="match status" value="1"/>
</dbReference>
<dbReference type="InterPro" id="IPR000218">
    <property type="entry name" value="Ribosomal_uL14"/>
</dbReference>
<dbReference type="InterPro" id="IPR005745">
    <property type="entry name" value="Ribosomal_uL14_bac-type"/>
</dbReference>
<dbReference type="InterPro" id="IPR019972">
    <property type="entry name" value="Ribosomal_uL14_CS"/>
</dbReference>
<dbReference type="InterPro" id="IPR036853">
    <property type="entry name" value="Ribosomal_uL14_sf"/>
</dbReference>
<dbReference type="NCBIfam" id="TIGR01067">
    <property type="entry name" value="rplN_bact"/>
    <property type="match status" value="1"/>
</dbReference>
<dbReference type="PANTHER" id="PTHR11761">
    <property type="entry name" value="50S/60S RIBOSOMAL PROTEIN L14/L23"/>
    <property type="match status" value="1"/>
</dbReference>
<dbReference type="PANTHER" id="PTHR11761:SF3">
    <property type="entry name" value="LARGE RIBOSOMAL SUBUNIT PROTEIN UL14M"/>
    <property type="match status" value="1"/>
</dbReference>
<dbReference type="Pfam" id="PF00238">
    <property type="entry name" value="Ribosomal_L14"/>
    <property type="match status" value="1"/>
</dbReference>
<dbReference type="SMART" id="SM01374">
    <property type="entry name" value="Ribosomal_L14"/>
    <property type="match status" value="1"/>
</dbReference>
<dbReference type="SUPFAM" id="SSF50193">
    <property type="entry name" value="Ribosomal protein L14"/>
    <property type="match status" value="1"/>
</dbReference>
<dbReference type="PROSITE" id="PS00049">
    <property type="entry name" value="RIBOSOMAL_L14"/>
    <property type="match status" value="1"/>
</dbReference>
<accession>B5FG19</accession>
<keyword id="KW-0687">Ribonucleoprotein</keyword>
<keyword id="KW-0689">Ribosomal protein</keyword>
<keyword id="KW-0694">RNA-binding</keyword>
<keyword id="KW-0699">rRNA-binding</keyword>
<feature type="chain" id="PRO_1000144350" description="Large ribosomal subunit protein uL14">
    <location>
        <begin position="1"/>
        <end position="123"/>
    </location>
</feature>
<sequence>MIQMQSTLDAADNSGARKVMCIKVLGGSHRRYAHIGDIIKVTVKEAIPRGKVKKGDVLKAVVVRTRKGVRRPDGSIIRFDRNACVLLNDTTEQPVGTRIFGPVTRELRNAKFMKIVSLAPEVL</sequence>
<proteinExistence type="inferred from homology"/>
<evidence type="ECO:0000255" key="1">
    <source>
        <dbReference type="HAMAP-Rule" id="MF_01367"/>
    </source>
</evidence>
<evidence type="ECO:0000305" key="2"/>
<organism>
    <name type="scientific">Aliivibrio fischeri (strain MJ11)</name>
    <name type="common">Vibrio fischeri</name>
    <dbReference type="NCBI Taxonomy" id="388396"/>
    <lineage>
        <taxon>Bacteria</taxon>
        <taxon>Pseudomonadati</taxon>
        <taxon>Pseudomonadota</taxon>
        <taxon>Gammaproteobacteria</taxon>
        <taxon>Vibrionales</taxon>
        <taxon>Vibrionaceae</taxon>
        <taxon>Aliivibrio</taxon>
    </lineage>
</organism>
<reference key="1">
    <citation type="submission" date="2008-08" db="EMBL/GenBank/DDBJ databases">
        <title>Complete sequence of Vibrio fischeri strain MJ11.</title>
        <authorList>
            <person name="Mandel M.J."/>
            <person name="Stabb E.V."/>
            <person name="Ruby E.G."/>
            <person name="Ferriera S."/>
            <person name="Johnson J."/>
            <person name="Kravitz S."/>
            <person name="Beeson K."/>
            <person name="Sutton G."/>
            <person name="Rogers Y.-H."/>
            <person name="Friedman R."/>
            <person name="Frazier M."/>
            <person name="Venter J.C."/>
        </authorList>
    </citation>
    <scope>NUCLEOTIDE SEQUENCE [LARGE SCALE GENOMIC DNA]</scope>
    <source>
        <strain>MJ11</strain>
    </source>
</reference>
<protein>
    <recommendedName>
        <fullName evidence="1">Large ribosomal subunit protein uL14</fullName>
    </recommendedName>
    <alternativeName>
        <fullName evidence="2">50S ribosomal protein L14</fullName>
    </alternativeName>
</protein>
<name>RL14_ALIFM</name>
<comment type="function">
    <text evidence="1">Binds to 23S rRNA. Forms part of two intersubunit bridges in the 70S ribosome.</text>
</comment>
<comment type="subunit">
    <text evidence="1">Part of the 50S ribosomal subunit. Forms a cluster with proteins L3 and L19. In the 70S ribosome, L14 and L19 interact and together make contacts with the 16S rRNA in bridges B5 and B8.</text>
</comment>
<comment type="similarity">
    <text evidence="1">Belongs to the universal ribosomal protein uL14 family.</text>
</comment>